<reference key="1">
    <citation type="journal article" date="1993" name="Plant Physiol.">
        <title>The cDNA sequence of two MADS box proteins in Petunia.</title>
        <authorList>
            <person name="Kush A."/>
            <person name="Brunelle A."/>
            <person name="Shevell D."/>
            <person name="Chua N.-H."/>
        </authorList>
    </citation>
    <scope>NUCLEOTIDE SEQUENCE [MRNA]</scope>
    <source>
        <tissue>Petal</tissue>
    </source>
</reference>
<organism>
    <name type="scientific">Petunia hybrida</name>
    <name type="common">Petunia</name>
    <dbReference type="NCBI Taxonomy" id="4102"/>
    <lineage>
        <taxon>Eukaryota</taxon>
        <taxon>Viridiplantae</taxon>
        <taxon>Streptophyta</taxon>
        <taxon>Embryophyta</taxon>
        <taxon>Tracheophyta</taxon>
        <taxon>Spermatophyta</taxon>
        <taxon>Magnoliopsida</taxon>
        <taxon>eudicotyledons</taxon>
        <taxon>Gunneridae</taxon>
        <taxon>Pentapetalae</taxon>
        <taxon>asterids</taxon>
        <taxon>lamiids</taxon>
        <taxon>Solanales</taxon>
        <taxon>Solanaceae</taxon>
        <taxon>Petunioideae</taxon>
        <taxon>Petunia</taxon>
    </lineage>
</organism>
<dbReference type="EMBL" id="X69946">
    <property type="protein sequence ID" value="CAA49567.1"/>
    <property type="molecule type" value="mRNA"/>
</dbReference>
<dbReference type="PIR" id="S31693">
    <property type="entry name" value="S31693"/>
</dbReference>
<dbReference type="SMR" id="Q07472"/>
<dbReference type="IntAct" id="Q07472">
    <property type="interactions" value="2"/>
</dbReference>
<dbReference type="GO" id="GO:0005634">
    <property type="term" value="C:nucleus"/>
    <property type="evidence" value="ECO:0007669"/>
    <property type="project" value="UniProtKB-SubCell"/>
</dbReference>
<dbReference type="GO" id="GO:0003700">
    <property type="term" value="F:DNA-binding transcription factor activity"/>
    <property type="evidence" value="ECO:0007669"/>
    <property type="project" value="InterPro"/>
</dbReference>
<dbReference type="GO" id="GO:0046983">
    <property type="term" value="F:protein dimerization activity"/>
    <property type="evidence" value="ECO:0007669"/>
    <property type="project" value="InterPro"/>
</dbReference>
<dbReference type="GO" id="GO:0000977">
    <property type="term" value="F:RNA polymerase II transcription regulatory region sequence-specific DNA binding"/>
    <property type="evidence" value="ECO:0007669"/>
    <property type="project" value="InterPro"/>
</dbReference>
<dbReference type="GO" id="GO:0045944">
    <property type="term" value="P:positive regulation of transcription by RNA polymerase II"/>
    <property type="evidence" value="ECO:0007669"/>
    <property type="project" value="InterPro"/>
</dbReference>
<dbReference type="CDD" id="cd00265">
    <property type="entry name" value="MADS_MEF2_like"/>
    <property type="match status" value="1"/>
</dbReference>
<dbReference type="FunFam" id="3.40.1810.10:FF:000016">
    <property type="entry name" value="MADS-box transcription factor 16"/>
    <property type="match status" value="1"/>
</dbReference>
<dbReference type="Gene3D" id="3.40.1810.10">
    <property type="entry name" value="Transcription factor, MADS-box"/>
    <property type="match status" value="1"/>
</dbReference>
<dbReference type="InterPro" id="IPR050142">
    <property type="entry name" value="MADS-box/MEF2_TF"/>
</dbReference>
<dbReference type="InterPro" id="IPR033896">
    <property type="entry name" value="MEF2-like_N"/>
</dbReference>
<dbReference type="InterPro" id="IPR002487">
    <property type="entry name" value="TF_Kbox"/>
</dbReference>
<dbReference type="InterPro" id="IPR002100">
    <property type="entry name" value="TF_MADSbox"/>
</dbReference>
<dbReference type="InterPro" id="IPR036879">
    <property type="entry name" value="TF_MADSbox_sf"/>
</dbReference>
<dbReference type="PANTHER" id="PTHR48019">
    <property type="entry name" value="SERUM RESPONSE FACTOR HOMOLOG"/>
    <property type="match status" value="1"/>
</dbReference>
<dbReference type="Pfam" id="PF01486">
    <property type="entry name" value="K-box"/>
    <property type="match status" value="1"/>
</dbReference>
<dbReference type="Pfam" id="PF00319">
    <property type="entry name" value="SRF-TF"/>
    <property type="match status" value="1"/>
</dbReference>
<dbReference type="PRINTS" id="PR00404">
    <property type="entry name" value="MADSDOMAIN"/>
</dbReference>
<dbReference type="SMART" id="SM00432">
    <property type="entry name" value="MADS"/>
    <property type="match status" value="1"/>
</dbReference>
<dbReference type="SUPFAM" id="SSF55455">
    <property type="entry name" value="SRF-like"/>
    <property type="match status" value="1"/>
</dbReference>
<dbReference type="PROSITE" id="PS51297">
    <property type="entry name" value="K_BOX"/>
    <property type="match status" value="1"/>
</dbReference>
<dbReference type="PROSITE" id="PS00350">
    <property type="entry name" value="MADS_BOX_1"/>
    <property type="match status" value="1"/>
</dbReference>
<dbReference type="PROSITE" id="PS50066">
    <property type="entry name" value="MADS_BOX_2"/>
    <property type="match status" value="1"/>
</dbReference>
<proteinExistence type="evidence at transcript level"/>
<comment type="function">
    <text>Transcription factor involved in the genetic control of flower development. Necessary for the normal development of petals. Absence of the PMADS1 protein causes transformation of petals into sepals.</text>
</comment>
<comment type="subcellular location">
    <subcellularLocation>
        <location>Nucleus</location>
    </subcellularLocation>
</comment>
<comment type="tissue specificity">
    <text>Predominantly expressed in petals and stamens, less in carpels and sepals.</text>
</comment>
<sequence length="231" mass="27039">MARGKIQIKRIENQTNRQVTYSKRRNGLFKKANELTVLCDAKVSIIMISSTGKLHEFISPSITTKQLFDLYQKTVGVDLWNSHYEKMQEQLRKLKEVNRNLRKEIRQRMGESLNDLNYEQLEELMENVDNSLKLIRERKYKVIGNQIETFKKKVRNVEEIHRNLLLEFDARQEDPYGLVEQEGDYNSVLGFPNGGHRILALRLQPNHHQPNHHHHLHSGGGSDITTFALLE</sequence>
<protein>
    <recommendedName>
        <fullName>Floral homeotic protein PMADS 1</fullName>
    </recommendedName>
    <alternativeName>
        <fullName>Green petal homeotic protein</fullName>
    </alternativeName>
</protein>
<gene>
    <name type="primary">PMADS1</name>
    <name type="synonym">GP</name>
</gene>
<feature type="chain" id="PRO_0000199490" description="Floral homeotic protein PMADS 1">
    <location>
        <begin position="1"/>
        <end position="231"/>
    </location>
</feature>
<feature type="domain" description="MADS-box" evidence="1">
    <location>
        <begin position="3"/>
        <end position="58"/>
    </location>
</feature>
<feature type="domain" description="K-box" evidence="2">
    <location>
        <begin position="84"/>
        <end position="174"/>
    </location>
</feature>
<name>MADS1_PETHY</name>
<evidence type="ECO:0000255" key="1">
    <source>
        <dbReference type="PROSITE-ProRule" id="PRU00251"/>
    </source>
</evidence>
<evidence type="ECO:0000255" key="2">
    <source>
        <dbReference type="PROSITE-ProRule" id="PRU00629"/>
    </source>
</evidence>
<accession>Q07472</accession>
<keyword id="KW-0010">Activator</keyword>
<keyword id="KW-0217">Developmental protein</keyword>
<keyword id="KW-0238">DNA-binding</keyword>
<keyword id="KW-0539">Nucleus</keyword>
<keyword id="KW-0804">Transcription</keyword>
<keyword id="KW-0805">Transcription regulation</keyword>